<feature type="signal peptide" evidence="2">
    <location>
        <begin position="1"/>
        <end position="20"/>
    </location>
</feature>
<feature type="chain" id="PRO_0000447985" description="Secreted RxLR effector protein PITG_21681">
    <location>
        <begin position="21"/>
        <end position="154"/>
    </location>
</feature>
<feature type="region of interest" description="Disordered" evidence="3">
    <location>
        <begin position="42"/>
        <end position="70"/>
    </location>
</feature>
<feature type="short sequence motif" description="RxLR-dEER" evidence="1">
    <location>
        <begin position="53"/>
        <end position="72"/>
    </location>
</feature>
<name>RXLAB_PHYIT</name>
<reference key="1">
    <citation type="journal article" date="2009" name="Nature">
        <title>Genome sequence and analysis of the Irish potato famine pathogen Phytophthora infestans.</title>
        <authorList>
            <consortium name="The Broad Institute Genome Sequencing Platform"/>
            <person name="Haas B.J."/>
            <person name="Kamoun S."/>
            <person name="Zody M.C."/>
            <person name="Jiang R.H."/>
            <person name="Handsaker R.E."/>
            <person name="Cano L.M."/>
            <person name="Grabherr M."/>
            <person name="Kodira C.D."/>
            <person name="Raffaele S."/>
            <person name="Torto-Alalibo T."/>
            <person name="Bozkurt T.O."/>
            <person name="Ah-Fong A.M."/>
            <person name="Alvarado L."/>
            <person name="Anderson V.L."/>
            <person name="Armstrong M.R."/>
            <person name="Avrova A."/>
            <person name="Baxter L."/>
            <person name="Beynon J."/>
            <person name="Boevink P.C."/>
            <person name="Bollmann S.R."/>
            <person name="Bos J.I."/>
            <person name="Bulone V."/>
            <person name="Cai G."/>
            <person name="Cakir C."/>
            <person name="Carrington J.C."/>
            <person name="Chawner M."/>
            <person name="Conti L."/>
            <person name="Costanzo S."/>
            <person name="Ewan R."/>
            <person name="Fahlgren N."/>
            <person name="Fischbach M.A."/>
            <person name="Fugelstad J."/>
            <person name="Gilroy E.M."/>
            <person name="Gnerre S."/>
            <person name="Green P.J."/>
            <person name="Grenville-Briggs L.J."/>
            <person name="Griffith J."/>
            <person name="Grunwald N.J."/>
            <person name="Horn K."/>
            <person name="Horner N.R."/>
            <person name="Hu C.H."/>
            <person name="Huitema E."/>
            <person name="Jeong D.H."/>
            <person name="Jones A.M."/>
            <person name="Jones J.D."/>
            <person name="Jones R.W."/>
            <person name="Karlsson E.K."/>
            <person name="Kunjeti S.G."/>
            <person name="Lamour K."/>
            <person name="Liu Z."/>
            <person name="Ma L."/>
            <person name="Maclean D."/>
            <person name="Chibucos M.C."/>
            <person name="McDonald H."/>
            <person name="McWalters J."/>
            <person name="Meijer H.J."/>
            <person name="Morgan W."/>
            <person name="Morris P.F."/>
            <person name="Munro C.A."/>
            <person name="O'Neill K."/>
            <person name="Ospina-Giraldo M."/>
            <person name="Pinzon A."/>
            <person name="Pritchard L."/>
            <person name="Ramsahoye B."/>
            <person name="Ren Q."/>
            <person name="Restrepo S."/>
            <person name="Roy S."/>
            <person name="Sadanandom A."/>
            <person name="Savidor A."/>
            <person name="Schornack S."/>
            <person name="Schwartz D.C."/>
            <person name="Schumann U.D."/>
            <person name="Schwessinger B."/>
            <person name="Seyer L."/>
            <person name="Sharpe T."/>
            <person name="Silvar C."/>
            <person name="Song J."/>
            <person name="Studholme D.J."/>
            <person name="Sykes S."/>
            <person name="Thines M."/>
            <person name="van de Vondervoort P.J."/>
            <person name="Phuntumart V."/>
            <person name="Wawra S."/>
            <person name="Weide R."/>
            <person name="Win J."/>
            <person name="Young C."/>
            <person name="Zhou S."/>
            <person name="Fry W."/>
            <person name="Meyers B.C."/>
            <person name="van West P."/>
            <person name="Ristaino J."/>
            <person name="Govers F."/>
            <person name="Birch P.R."/>
            <person name="Whisson S.C."/>
            <person name="Judelson H.S."/>
            <person name="Nusbaum C."/>
        </authorList>
    </citation>
    <scope>NUCLEOTIDE SEQUENCE [LARGE SCALE GENOMIC DNA]</scope>
    <scope>INDUCTION</scope>
    <source>
        <strain>T30-4</strain>
    </source>
</reference>
<reference key="2">
    <citation type="journal article" date="2019" name="Int. J. Mol. Sci.">
        <title>Transgenic RXLR effector PITG_15718.2 suppresses immunity and reduces vegetative growth in potato.</title>
        <authorList>
            <person name="Wang J."/>
            <person name="Gao C."/>
            <person name="Li L."/>
            <person name="Cao W."/>
            <person name="Dong R."/>
            <person name="Ding X."/>
            <person name="Zhu C."/>
            <person name="Chu Z."/>
        </authorList>
    </citation>
    <scope>INDUCTION</scope>
    <scope>FUNCTION</scope>
</reference>
<keyword id="KW-1185">Reference proteome</keyword>
<keyword id="KW-0964">Secreted</keyword>
<keyword id="KW-0732">Signal</keyword>
<keyword id="KW-0843">Virulence</keyword>
<proteinExistence type="evidence at transcript level"/>
<sequence>MRRYAALMVIDAVLLSTSQALSSSHASELRSQLSAADAMFPSAERDGGIPNKRSLRRISVTESNDGERDEERGFQISILTKLQKWATKMKLPKTTKNLQFRIWPKEKKDPKAVYAELKLAGLDPKAAKANPEFADYLAYSKIWNHRGGRYMTRS</sequence>
<evidence type="ECO:0000250" key="1">
    <source>
        <dbReference type="UniProtKB" id="P0CU89"/>
    </source>
</evidence>
<evidence type="ECO:0000255" key="2"/>
<evidence type="ECO:0000256" key="3">
    <source>
        <dbReference type="SAM" id="MobiDB-lite"/>
    </source>
</evidence>
<evidence type="ECO:0000303" key="4">
    <source>
    </source>
</evidence>
<evidence type="ECO:0000305" key="5"/>
<comment type="function">
    <text evidence="1">Secreted effector that is involved in host plant infection (By similarity). Increases the susceptibility to P.infestans and reduces the plant growth (By similarity). Affects the expression of host genes (By similarity).</text>
</comment>
<comment type="subcellular location">
    <subcellularLocation>
        <location evidence="1">Secreted</location>
    </subcellularLocation>
    <subcellularLocation>
        <location evidence="1">Host cell</location>
    </subcellularLocation>
</comment>
<comment type="domain">
    <text evidence="1">The RxLR-dEER motif acts to carry the protein into the host cell cytoplasm through binding to cell surface phosphatidylinositol-3-phosphate.</text>
</comment>
<comment type="similarity">
    <text evidence="5">Belongs to the RxLR effector family.</text>
</comment>
<gene>
    <name type="ORF">PITG_21681</name>
</gene>
<dbReference type="EMBL" id="DS028863">
    <property type="protein sequence ID" value="EEY68897.1"/>
    <property type="molecule type" value="Genomic_DNA"/>
</dbReference>
<dbReference type="RefSeq" id="XP_002897993.1">
    <property type="nucleotide sequence ID" value="XM_002897947.1"/>
</dbReference>
<dbReference type="RefSeq" id="XP_002996886.1">
    <property type="nucleotide sequence ID" value="XM_002996840.1"/>
</dbReference>
<dbReference type="GeneID" id="9473566"/>
<dbReference type="KEGG" id="pif:PITG_15718"/>
<dbReference type="KEGG" id="pif:PITG_21681"/>
<dbReference type="VEuPathDB" id="FungiDB:PITG_15718"/>
<dbReference type="VEuPathDB" id="FungiDB:PITG_21681"/>
<dbReference type="InParanoid" id="P0CU90"/>
<dbReference type="OrthoDB" id="120194at2759"/>
<dbReference type="Proteomes" id="UP000006643">
    <property type="component" value="Partially assembled WGS sequence"/>
</dbReference>
<dbReference type="GO" id="GO:0005576">
    <property type="term" value="C:extracellular region"/>
    <property type="evidence" value="ECO:0007669"/>
    <property type="project" value="UniProtKB-SubCell"/>
</dbReference>
<dbReference type="GO" id="GO:0043657">
    <property type="term" value="C:host cell"/>
    <property type="evidence" value="ECO:0007669"/>
    <property type="project" value="UniProtKB-SubCell"/>
</dbReference>
<dbReference type="InterPro" id="IPR031825">
    <property type="entry name" value="RXLR"/>
</dbReference>
<dbReference type="Pfam" id="PF16810">
    <property type="entry name" value="RXLR"/>
    <property type="match status" value="1"/>
</dbReference>
<accession>P0CU90</accession>
<accession>D0NSE5</accession>
<organism>
    <name type="scientific">Phytophthora infestans (strain T30-4)</name>
    <name type="common">Potato late blight agent</name>
    <dbReference type="NCBI Taxonomy" id="403677"/>
    <lineage>
        <taxon>Eukaryota</taxon>
        <taxon>Sar</taxon>
        <taxon>Stramenopiles</taxon>
        <taxon>Oomycota</taxon>
        <taxon>Peronosporales</taxon>
        <taxon>Peronosporaceae</taxon>
        <taxon>Phytophthora</taxon>
    </lineage>
</organism>
<protein>
    <recommendedName>
        <fullName evidence="4">Secreted RxLR effector protein PITG_21681</fullName>
    </recommendedName>
</protein>